<feature type="chain" id="PRO_1000187758" description="Ubiquinone/menaquinone biosynthesis C-methyltransferase UbiE">
    <location>
        <begin position="1"/>
        <end position="251"/>
    </location>
</feature>
<feature type="binding site" evidence="1">
    <location>
        <position position="74"/>
    </location>
    <ligand>
        <name>S-adenosyl-L-methionine</name>
        <dbReference type="ChEBI" id="CHEBI:59789"/>
    </ligand>
</feature>
<feature type="binding site" evidence="1">
    <location>
        <position position="95"/>
    </location>
    <ligand>
        <name>S-adenosyl-L-methionine</name>
        <dbReference type="ChEBI" id="CHEBI:59789"/>
    </ligand>
</feature>
<feature type="binding site" evidence="1">
    <location>
        <begin position="123"/>
        <end position="124"/>
    </location>
    <ligand>
        <name>S-adenosyl-L-methionine</name>
        <dbReference type="ChEBI" id="CHEBI:59789"/>
    </ligand>
</feature>
<feature type="binding site" evidence="1">
    <location>
        <position position="140"/>
    </location>
    <ligand>
        <name>S-adenosyl-L-methionine</name>
        <dbReference type="ChEBI" id="CHEBI:59789"/>
    </ligand>
</feature>
<sequence length="251" mass="28073">MVDKSQETTHFGFQTVAKEQKADMVAHVFHSVASKYDVMNDLMSFGIHRLWKRFTIDCSGVRRGQTVLDLAGGTGDLTAKFSRLVGETGKVVLADINESMLKMGREKLRNIGVIGNVEYVQANAEALPFPDNTFDCITISFGLRNVTDKDKALRSMYRVLKPGGRLLVLEFSKPIIEPLSKAYDAYSFHVLPRIGSLVANDADSYRYLAESIRMHPDQDTLKAMMQDAGFESVDYYNLTAGVVALHRGYKF</sequence>
<keyword id="KW-0474">Menaquinone biosynthesis</keyword>
<keyword id="KW-0489">Methyltransferase</keyword>
<keyword id="KW-0949">S-adenosyl-L-methionine</keyword>
<keyword id="KW-0808">Transferase</keyword>
<keyword id="KW-0831">Ubiquinone biosynthesis</keyword>
<protein>
    <recommendedName>
        <fullName evidence="1">Ubiquinone/menaquinone biosynthesis C-methyltransferase UbiE</fullName>
        <ecNumber evidence="1">2.1.1.163</ecNumber>
        <ecNumber evidence="1">2.1.1.201</ecNumber>
    </recommendedName>
    <alternativeName>
        <fullName evidence="1">2-methoxy-6-polyprenyl-1,4-benzoquinol methylase</fullName>
    </alternativeName>
    <alternativeName>
        <fullName evidence="1">Demethylmenaquinone methyltransferase</fullName>
    </alternativeName>
</protein>
<organism>
    <name type="scientific">Escherichia coli O7:K1 (strain IAI39 / ExPEC)</name>
    <dbReference type="NCBI Taxonomy" id="585057"/>
    <lineage>
        <taxon>Bacteria</taxon>
        <taxon>Pseudomonadati</taxon>
        <taxon>Pseudomonadota</taxon>
        <taxon>Gammaproteobacteria</taxon>
        <taxon>Enterobacterales</taxon>
        <taxon>Enterobacteriaceae</taxon>
        <taxon>Escherichia</taxon>
    </lineage>
</organism>
<dbReference type="EC" id="2.1.1.163" evidence="1"/>
<dbReference type="EC" id="2.1.1.201" evidence="1"/>
<dbReference type="EMBL" id="CU928164">
    <property type="protein sequence ID" value="CAR19281.1"/>
    <property type="molecule type" value="Genomic_DNA"/>
</dbReference>
<dbReference type="RefSeq" id="WP_000227958.1">
    <property type="nucleotide sequence ID" value="NC_011750.1"/>
</dbReference>
<dbReference type="RefSeq" id="YP_002409091.1">
    <property type="nucleotide sequence ID" value="NC_011750.1"/>
</dbReference>
<dbReference type="SMR" id="B7NV33"/>
<dbReference type="STRING" id="585057.ECIAI39_3162"/>
<dbReference type="GeneID" id="93778102"/>
<dbReference type="KEGG" id="ect:ECIAI39_3162"/>
<dbReference type="PATRIC" id="fig|585057.6.peg.3283"/>
<dbReference type="HOGENOM" id="CLU_037990_0_0_6"/>
<dbReference type="UniPathway" id="UPA00079">
    <property type="reaction ID" value="UER00169"/>
</dbReference>
<dbReference type="UniPathway" id="UPA00232"/>
<dbReference type="Proteomes" id="UP000000749">
    <property type="component" value="Chromosome"/>
</dbReference>
<dbReference type="GO" id="GO:0008425">
    <property type="term" value="F:2-methoxy-6-polyprenyl-1,4-benzoquinol methyltransferase activity"/>
    <property type="evidence" value="ECO:0007669"/>
    <property type="project" value="UniProtKB-UniRule"/>
</dbReference>
<dbReference type="GO" id="GO:0043770">
    <property type="term" value="F:demethylmenaquinone methyltransferase activity"/>
    <property type="evidence" value="ECO:0007669"/>
    <property type="project" value="UniProtKB-UniRule"/>
</dbReference>
<dbReference type="GO" id="GO:0009060">
    <property type="term" value="P:aerobic respiration"/>
    <property type="evidence" value="ECO:0007669"/>
    <property type="project" value="UniProtKB-UniRule"/>
</dbReference>
<dbReference type="GO" id="GO:0009234">
    <property type="term" value="P:menaquinone biosynthetic process"/>
    <property type="evidence" value="ECO:0007669"/>
    <property type="project" value="UniProtKB-UniRule"/>
</dbReference>
<dbReference type="GO" id="GO:0032259">
    <property type="term" value="P:methylation"/>
    <property type="evidence" value="ECO:0007669"/>
    <property type="project" value="UniProtKB-KW"/>
</dbReference>
<dbReference type="CDD" id="cd02440">
    <property type="entry name" value="AdoMet_MTases"/>
    <property type="match status" value="1"/>
</dbReference>
<dbReference type="FunFam" id="3.40.50.150:FF:000014">
    <property type="entry name" value="Ubiquinone/menaquinone biosynthesis C-methyltransferase UbiE"/>
    <property type="match status" value="1"/>
</dbReference>
<dbReference type="Gene3D" id="3.40.50.150">
    <property type="entry name" value="Vaccinia Virus protein VP39"/>
    <property type="match status" value="1"/>
</dbReference>
<dbReference type="HAMAP" id="MF_01813">
    <property type="entry name" value="MenG_UbiE_methyltr"/>
    <property type="match status" value="1"/>
</dbReference>
<dbReference type="InterPro" id="IPR029063">
    <property type="entry name" value="SAM-dependent_MTases_sf"/>
</dbReference>
<dbReference type="InterPro" id="IPR004033">
    <property type="entry name" value="UbiE/COQ5_MeTrFase"/>
</dbReference>
<dbReference type="InterPro" id="IPR023576">
    <property type="entry name" value="UbiE/COQ5_MeTrFase_CS"/>
</dbReference>
<dbReference type="NCBIfam" id="TIGR01934">
    <property type="entry name" value="MenG_MenH_UbiE"/>
    <property type="match status" value="1"/>
</dbReference>
<dbReference type="NCBIfam" id="NF001240">
    <property type="entry name" value="PRK00216.1-1"/>
    <property type="match status" value="1"/>
</dbReference>
<dbReference type="NCBIfam" id="NF001242">
    <property type="entry name" value="PRK00216.1-3"/>
    <property type="match status" value="1"/>
</dbReference>
<dbReference type="NCBIfam" id="NF001244">
    <property type="entry name" value="PRK00216.1-5"/>
    <property type="match status" value="1"/>
</dbReference>
<dbReference type="PANTHER" id="PTHR43591:SF24">
    <property type="entry name" value="2-METHOXY-6-POLYPRENYL-1,4-BENZOQUINOL METHYLASE, MITOCHONDRIAL"/>
    <property type="match status" value="1"/>
</dbReference>
<dbReference type="PANTHER" id="PTHR43591">
    <property type="entry name" value="METHYLTRANSFERASE"/>
    <property type="match status" value="1"/>
</dbReference>
<dbReference type="Pfam" id="PF01209">
    <property type="entry name" value="Ubie_methyltran"/>
    <property type="match status" value="1"/>
</dbReference>
<dbReference type="SUPFAM" id="SSF53335">
    <property type="entry name" value="S-adenosyl-L-methionine-dependent methyltransferases"/>
    <property type="match status" value="1"/>
</dbReference>
<dbReference type="PROSITE" id="PS51608">
    <property type="entry name" value="SAM_MT_UBIE"/>
    <property type="match status" value="1"/>
</dbReference>
<dbReference type="PROSITE" id="PS01183">
    <property type="entry name" value="UBIE_1"/>
    <property type="match status" value="1"/>
</dbReference>
<dbReference type="PROSITE" id="PS01184">
    <property type="entry name" value="UBIE_2"/>
    <property type="match status" value="1"/>
</dbReference>
<gene>
    <name evidence="1" type="primary">ubiE</name>
    <name type="ordered locus">ECIAI39_3162</name>
</gene>
<reference key="1">
    <citation type="journal article" date="2009" name="PLoS Genet.">
        <title>Organised genome dynamics in the Escherichia coli species results in highly diverse adaptive paths.</title>
        <authorList>
            <person name="Touchon M."/>
            <person name="Hoede C."/>
            <person name="Tenaillon O."/>
            <person name="Barbe V."/>
            <person name="Baeriswyl S."/>
            <person name="Bidet P."/>
            <person name="Bingen E."/>
            <person name="Bonacorsi S."/>
            <person name="Bouchier C."/>
            <person name="Bouvet O."/>
            <person name="Calteau A."/>
            <person name="Chiapello H."/>
            <person name="Clermont O."/>
            <person name="Cruveiller S."/>
            <person name="Danchin A."/>
            <person name="Diard M."/>
            <person name="Dossat C."/>
            <person name="Karoui M.E."/>
            <person name="Frapy E."/>
            <person name="Garry L."/>
            <person name="Ghigo J.M."/>
            <person name="Gilles A.M."/>
            <person name="Johnson J."/>
            <person name="Le Bouguenec C."/>
            <person name="Lescat M."/>
            <person name="Mangenot S."/>
            <person name="Martinez-Jehanne V."/>
            <person name="Matic I."/>
            <person name="Nassif X."/>
            <person name="Oztas S."/>
            <person name="Petit M.A."/>
            <person name="Pichon C."/>
            <person name="Rouy Z."/>
            <person name="Ruf C.S."/>
            <person name="Schneider D."/>
            <person name="Tourret J."/>
            <person name="Vacherie B."/>
            <person name="Vallenet D."/>
            <person name="Medigue C."/>
            <person name="Rocha E.P.C."/>
            <person name="Denamur E."/>
        </authorList>
    </citation>
    <scope>NUCLEOTIDE SEQUENCE [LARGE SCALE GENOMIC DNA]</scope>
    <source>
        <strain>IAI39 / ExPEC</strain>
    </source>
</reference>
<comment type="function">
    <text evidence="1">Methyltransferase required for the conversion of demethylmenaquinol (DMKH2) to menaquinol (MKH2) and the conversion of 2-polyprenyl-6-methoxy-1,4-benzoquinol (DDMQH2) to 2-polyprenyl-3-methyl-6-methoxy-1,4-benzoquinol (DMQH2).</text>
</comment>
<comment type="catalytic activity">
    <reaction evidence="1">
        <text>a 2-demethylmenaquinol + S-adenosyl-L-methionine = a menaquinol + S-adenosyl-L-homocysteine + H(+)</text>
        <dbReference type="Rhea" id="RHEA:42640"/>
        <dbReference type="Rhea" id="RHEA-COMP:9539"/>
        <dbReference type="Rhea" id="RHEA-COMP:9563"/>
        <dbReference type="ChEBI" id="CHEBI:15378"/>
        <dbReference type="ChEBI" id="CHEBI:18151"/>
        <dbReference type="ChEBI" id="CHEBI:55437"/>
        <dbReference type="ChEBI" id="CHEBI:57856"/>
        <dbReference type="ChEBI" id="CHEBI:59789"/>
        <dbReference type="EC" id="2.1.1.163"/>
    </reaction>
</comment>
<comment type="catalytic activity">
    <reaction evidence="1">
        <text>a 2-methoxy-6-(all-trans-polyprenyl)benzene-1,4-diol + S-adenosyl-L-methionine = a 5-methoxy-2-methyl-3-(all-trans-polyprenyl)benzene-1,4-diol + S-adenosyl-L-homocysteine + H(+)</text>
        <dbReference type="Rhea" id="RHEA:28286"/>
        <dbReference type="Rhea" id="RHEA-COMP:10858"/>
        <dbReference type="Rhea" id="RHEA-COMP:10859"/>
        <dbReference type="ChEBI" id="CHEBI:15378"/>
        <dbReference type="ChEBI" id="CHEBI:57856"/>
        <dbReference type="ChEBI" id="CHEBI:59789"/>
        <dbReference type="ChEBI" id="CHEBI:84166"/>
        <dbReference type="ChEBI" id="CHEBI:84167"/>
        <dbReference type="EC" id="2.1.1.201"/>
    </reaction>
</comment>
<comment type="pathway">
    <text evidence="1">Quinol/quinone metabolism; menaquinone biosynthesis; menaquinol from 1,4-dihydroxy-2-naphthoate: step 2/2.</text>
</comment>
<comment type="pathway">
    <text evidence="1">Cofactor biosynthesis; ubiquinone biosynthesis.</text>
</comment>
<comment type="similarity">
    <text evidence="1">Belongs to the class I-like SAM-binding methyltransferase superfamily. MenG/UbiE family.</text>
</comment>
<proteinExistence type="inferred from homology"/>
<name>UBIE_ECO7I</name>
<evidence type="ECO:0000255" key="1">
    <source>
        <dbReference type="HAMAP-Rule" id="MF_01813"/>
    </source>
</evidence>
<accession>B7NV33</accession>